<proteinExistence type="predicted"/>
<accession>O34775</accession>
<accession>Q7BVQ4</accession>
<name>YOST_BACSU</name>
<sequence length="149" mass="17015">MKITIEELPELRIAYFRNVGEYGGKQNKELMESFKKWAQLNGVFHNSVILGIPQDDPSITPKEECRYDVGVVLNEDFNVLQPAQVGKLPGGKYAVFLLDHTKEAVSEFWGNIFSEIEKNSLTMRGEPIIERYTSQMIDNHLCEVLVPIQ</sequence>
<keyword id="KW-1185">Reference proteome</keyword>
<dbReference type="EMBL" id="AF012906">
    <property type="protein sequence ID" value="AAB92489.1"/>
    <property type="molecule type" value="Genomic_DNA"/>
</dbReference>
<dbReference type="EMBL" id="AL009126">
    <property type="protein sequence ID" value="CAB13892.1"/>
    <property type="molecule type" value="Genomic_DNA"/>
</dbReference>
<dbReference type="RefSeq" id="NP_389882.1">
    <property type="nucleotide sequence ID" value="NC_000964.3"/>
</dbReference>
<dbReference type="RefSeq" id="WP_004399409.1">
    <property type="nucleotide sequence ID" value="NZ_OZ025638.1"/>
</dbReference>
<dbReference type="SMR" id="O34775"/>
<dbReference type="FunCoup" id="O34775">
    <property type="interactions" value="20"/>
</dbReference>
<dbReference type="STRING" id="224308.BSU20010"/>
<dbReference type="PaxDb" id="224308-BSU20010"/>
<dbReference type="EnsemblBacteria" id="CAB13892">
    <property type="protein sequence ID" value="CAB13892"/>
    <property type="gene ID" value="BSU_20010"/>
</dbReference>
<dbReference type="GeneID" id="939471"/>
<dbReference type="KEGG" id="bsu:BSU20010"/>
<dbReference type="PATRIC" id="fig|224308.179.peg.2189"/>
<dbReference type="eggNOG" id="COG3449">
    <property type="taxonomic scope" value="Bacteria"/>
</dbReference>
<dbReference type="InParanoid" id="O34775"/>
<dbReference type="OrthoDB" id="5337216at2"/>
<dbReference type="PhylomeDB" id="O34775"/>
<dbReference type="BioCyc" id="BSUB:BSU20010-MONOMER"/>
<dbReference type="Proteomes" id="UP000001570">
    <property type="component" value="Chromosome"/>
</dbReference>
<dbReference type="Gene3D" id="3.20.80.10">
    <property type="entry name" value="Regulatory factor, effector binding domain"/>
    <property type="match status" value="1"/>
</dbReference>
<dbReference type="InterPro" id="IPR010499">
    <property type="entry name" value="AraC_E-bd"/>
</dbReference>
<dbReference type="InterPro" id="IPR050908">
    <property type="entry name" value="DNA_gyrase_inhibitor"/>
</dbReference>
<dbReference type="InterPro" id="IPR029442">
    <property type="entry name" value="GyrI-like"/>
</dbReference>
<dbReference type="InterPro" id="IPR011256">
    <property type="entry name" value="Reg_factor_effector_dom_sf"/>
</dbReference>
<dbReference type="PANTHER" id="PTHR40055">
    <property type="entry name" value="TRANSCRIPTIONAL REGULATOR YGIV-RELATED"/>
    <property type="match status" value="1"/>
</dbReference>
<dbReference type="PANTHER" id="PTHR40055:SF1">
    <property type="entry name" value="TRANSCRIPTIONAL REGULATOR YGIV-RELATED"/>
    <property type="match status" value="1"/>
</dbReference>
<dbReference type="Pfam" id="PF06445">
    <property type="entry name" value="GyrI-like"/>
    <property type="match status" value="1"/>
</dbReference>
<dbReference type="SMART" id="SM00871">
    <property type="entry name" value="AraC_E_bind"/>
    <property type="match status" value="1"/>
</dbReference>
<dbReference type="SUPFAM" id="SSF55136">
    <property type="entry name" value="Probable bacterial effector-binding domain"/>
    <property type="match status" value="1"/>
</dbReference>
<feature type="chain" id="PRO_0000388356" description="SPbeta prophage-derived putative transcriptional regulator YosT">
    <location>
        <begin position="1"/>
        <end position="149"/>
    </location>
</feature>
<gene>
    <name type="primary">yosT</name>
    <name type="synonym">yojV</name>
    <name type="ordered locus">BSU20010</name>
</gene>
<organism>
    <name type="scientific">Bacillus subtilis (strain 168)</name>
    <dbReference type="NCBI Taxonomy" id="224308"/>
    <lineage>
        <taxon>Bacteria</taxon>
        <taxon>Bacillati</taxon>
        <taxon>Bacillota</taxon>
        <taxon>Bacilli</taxon>
        <taxon>Bacillales</taxon>
        <taxon>Bacillaceae</taxon>
        <taxon>Bacillus</taxon>
    </lineage>
</organism>
<reference key="1">
    <citation type="journal article" date="1998" name="DNA Res.">
        <title>An 8 kb nucleotide sequence at the 3' flanking region of the sspC gene (184 degrees) on the Bacillus subtilis 168 chromosome containing an intein and an intron.</title>
        <authorList>
            <person name="Ghim S.-Y."/>
            <person name="Choi S.-K."/>
            <person name="Shin B.-S."/>
            <person name="Park S.-H."/>
        </authorList>
    </citation>
    <scope>NUCLEOTIDE SEQUENCE [GENOMIC DNA]</scope>
    <source>
        <strain>168</strain>
    </source>
</reference>
<reference key="2">
    <citation type="journal article" date="1997" name="Nature">
        <title>The complete genome sequence of the Gram-positive bacterium Bacillus subtilis.</title>
        <authorList>
            <person name="Kunst F."/>
            <person name="Ogasawara N."/>
            <person name="Moszer I."/>
            <person name="Albertini A.M."/>
            <person name="Alloni G."/>
            <person name="Azevedo V."/>
            <person name="Bertero M.G."/>
            <person name="Bessieres P."/>
            <person name="Bolotin A."/>
            <person name="Borchert S."/>
            <person name="Borriss R."/>
            <person name="Boursier L."/>
            <person name="Brans A."/>
            <person name="Braun M."/>
            <person name="Brignell S.C."/>
            <person name="Bron S."/>
            <person name="Brouillet S."/>
            <person name="Bruschi C.V."/>
            <person name="Caldwell B."/>
            <person name="Capuano V."/>
            <person name="Carter N.M."/>
            <person name="Choi S.-K."/>
            <person name="Codani J.-J."/>
            <person name="Connerton I.F."/>
            <person name="Cummings N.J."/>
            <person name="Daniel R.A."/>
            <person name="Denizot F."/>
            <person name="Devine K.M."/>
            <person name="Duesterhoeft A."/>
            <person name="Ehrlich S.D."/>
            <person name="Emmerson P.T."/>
            <person name="Entian K.-D."/>
            <person name="Errington J."/>
            <person name="Fabret C."/>
            <person name="Ferrari E."/>
            <person name="Foulger D."/>
            <person name="Fritz C."/>
            <person name="Fujita M."/>
            <person name="Fujita Y."/>
            <person name="Fuma S."/>
            <person name="Galizzi A."/>
            <person name="Galleron N."/>
            <person name="Ghim S.-Y."/>
            <person name="Glaser P."/>
            <person name="Goffeau A."/>
            <person name="Golightly E.J."/>
            <person name="Grandi G."/>
            <person name="Guiseppi G."/>
            <person name="Guy B.J."/>
            <person name="Haga K."/>
            <person name="Haiech J."/>
            <person name="Harwood C.R."/>
            <person name="Henaut A."/>
            <person name="Hilbert H."/>
            <person name="Holsappel S."/>
            <person name="Hosono S."/>
            <person name="Hullo M.-F."/>
            <person name="Itaya M."/>
            <person name="Jones L.-M."/>
            <person name="Joris B."/>
            <person name="Karamata D."/>
            <person name="Kasahara Y."/>
            <person name="Klaerr-Blanchard M."/>
            <person name="Klein C."/>
            <person name="Kobayashi Y."/>
            <person name="Koetter P."/>
            <person name="Koningstein G."/>
            <person name="Krogh S."/>
            <person name="Kumano M."/>
            <person name="Kurita K."/>
            <person name="Lapidus A."/>
            <person name="Lardinois S."/>
            <person name="Lauber J."/>
            <person name="Lazarevic V."/>
            <person name="Lee S.-M."/>
            <person name="Levine A."/>
            <person name="Liu H."/>
            <person name="Masuda S."/>
            <person name="Mauel C."/>
            <person name="Medigue C."/>
            <person name="Medina N."/>
            <person name="Mellado R.P."/>
            <person name="Mizuno M."/>
            <person name="Moestl D."/>
            <person name="Nakai S."/>
            <person name="Noback M."/>
            <person name="Noone D."/>
            <person name="O'Reilly M."/>
            <person name="Ogawa K."/>
            <person name="Ogiwara A."/>
            <person name="Oudega B."/>
            <person name="Park S.-H."/>
            <person name="Parro V."/>
            <person name="Pohl T.M."/>
            <person name="Portetelle D."/>
            <person name="Porwollik S."/>
            <person name="Prescott A.M."/>
            <person name="Presecan E."/>
            <person name="Pujic P."/>
            <person name="Purnelle B."/>
            <person name="Rapoport G."/>
            <person name="Rey M."/>
            <person name="Reynolds S."/>
            <person name="Rieger M."/>
            <person name="Rivolta C."/>
            <person name="Rocha E."/>
            <person name="Roche B."/>
            <person name="Rose M."/>
            <person name="Sadaie Y."/>
            <person name="Sato T."/>
            <person name="Scanlan E."/>
            <person name="Schleich S."/>
            <person name="Schroeter R."/>
            <person name="Scoffone F."/>
            <person name="Sekiguchi J."/>
            <person name="Sekowska A."/>
            <person name="Seror S.J."/>
            <person name="Serror P."/>
            <person name="Shin B.-S."/>
            <person name="Soldo B."/>
            <person name="Sorokin A."/>
            <person name="Tacconi E."/>
            <person name="Takagi T."/>
            <person name="Takahashi H."/>
            <person name="Takemaru K."/>
            <person name="Takeuchi M."/>
            <person name="Tamakoshi A."/>
            <person name="Tanaka T."/>
            <person name="Terpstra P."/>
            <person name="Tognoni A."/>
            <person name="Tosato V."/>
            <person name="Uchiyama S."/>
            <person name="Vandenbol M."/>
            <person name="Vannier F."/>
            <person name="Vassarotti A."/>
            <person name="Viari A."/>
            <person name="Wambutt R."/>
            <person name="Wedler E."/>
            <person name="Wedler H."/>
            <person name="Weitzenegger T."/>
            <person name="Winters P."/>
            <person name="Wipat A."/>
            <person name="Yamamoto H."/>
            <person name="Yamane K."/>
            <person name="Yasumoto K."/>
            <person name="Yata K."/>
            <person name="Yoshida K."/>
            <person name="Yoshikawa H.-F."/>
            <person name="Zumstein E."/>
            <person name="Yoshikawa H."/>
            <person name="Danchin A."/>
        </authorList>
    </citation>
    <scope>NUCLEOTIDE SEQUENCE [LARGE SCALE GENOMIC DNA]</scope>
    <source>
        <strain>168</strain>
    </source>
</reference>
<protein>
    <recommendedName>
        <fullName>SPbeta prophage-derived putative transcriptional regulator YosT</fullName>
    </recommendedName>
</protein>